<protein>
    <recommendedName>
        <fullName evidence="1">Polyribonucleotide nucleotidyltransferase</fullName>
        <ecNumber evidence="1">2.7.7.8</ecNumber>
    </recommendedName>
    <alternativeName>
        <fullName evidence="1">Polynucleotide phosphorylase</fullName>
        <shortName evidence="1">PNPase</shortName>
    </alternativeName>
</protein>
<reference key="1">
    <citation type="journal article" date="2011" name="J. Bacteriol.">
        <title>Genome of Ochrobactrum anthropi ATCC 49188 T, a versatile opportunistic pathogen and symbiont of several eukaryotic hosts.</title>
        <authorList>
            <person name="Chain P.S."/>
            <person name="Lang D.M."/>
            <person name="Comerci D.J."/>
            <person name="Malfatti S.A."/>
            <person name="Vergez L.M."/>
            <person name="Shin M."/>
            <person name="Ugalde R.A."/>
            <person name="Garcia E."/>
            <person name="Tolmasky M.E."/>
        </authorList>
    </citation>
    <scope>NUCLEOTIDE SEQUENCE [LARGE SCALE GENOMIC DNA]</scope>
    <source>
        <strain>ATCC 49188 / DSM 6882 / CCUG 24695 / JCM 21032 / LMG 3331 / NBRC 15819 / NCTC 12168 / Alc 37</strain>
    </source>
</reference>
<dbReference type="EC" id="2.7.7.8" evidence="1"/>
<dbReference type="EMBL" id="CP000758">
    <property type="protein sequence ID" value="ABS13465.1"/>
    <property type="molecule type" value="Genomic_DNA"/>
</dbReference>
<dbReference type="RefSeq" id="WP_012090988.1">
    <property type="nucleotide sequence ID" value="NC_009667.1"/>
</dbReference>
<dbReference type="SMR" id="A6WWW1"/>
<dbReference type="STRING" id="439375.Oant_0743"/>
<dbReference type="KEGG" id="oan:Oant_0743"/>
<dbReference type="PATRIC" id="fig|439375.7.peg.784"/>
<dbReference type="eggNOG" id="COG1185">
    <property type="taxonomic scope" value="Bacteria"/>
</dbReference>
<dbReference type="HOGENOM" id="CLU_004217_2_2_5"/>
<dbReference type="PhylomeDB" id="A6WWW1"/>
<dbReference type="Proteomes" id="UP000002301">
    <property type="component" value="Chromosome 1"/>
</dbReference>
<dbReference type="GO" id="GO:0005829">
    <property type="term" value="C:cytosol"/>
    <property type="evidence" value="ECO:0007669"/>
    <property type="project" value="TreeGrafter"/>
</dbReference>
<dbReference type="GO" id="GO:0000175">
    <property type="term" value="F:3'-5'-RNA exonuclease activity"/>
    <property type="evidence" value="ECO:0007669"/>
    <property type="project" value="TreeGrafter"/>
</dbReference>
<dbReference type="GO" id="GO:0000287">
    <property type="term" value="F:magnesium ion binding"/>
    <property type="evidence" value="ECO:0007669"/>
    <property type="project" value="UniProtKB-UniRule"/>
</dbReference>
<dbReference type="GO" id="GO:0004654">
    <property type="term" value="F:polyribonucleotide nucleotidyltransferase activity"/>
    <property type="evidence" value="ECO:0007669"/>
    <property type="project" value="UniProtKB-UniRule"/>
</dbReference>
<dbReference type="GO" id="GO:0003723">
    <property type="term" value="F:RNA binding"/>
    <property type="evidence" value="ECO:0007669"/>
    <property type="project" value="UniProtKB-UniRule"/>
</dbReference>
<dbReference type="GO" id="GO:0006402">
    <property type="term" value="P:mRNA catabolic process"/>
    <property type="evidence" value="ECO:0007669"/>
    <property type="project" value="UniProtKB-UniRule"/>
</dbReference>
<dbReference type="GO" id="GO:0006396">
    <property type="term" value="P:RNA processing"/>
    <property type="evidence" value="ECO:0007669"/>
    <property type="project" value="InterPro"/>
</dbReference>
<dbReference type="CDD" id="cd02393">
    <property type="entry name" value="KH-I_PNPase"/>
    <property type="match status" value="1"/>
</dbReference>
<dbReference type="CDD" id="cd11363">
    <property type="entry name" value="RNase_PH_PNPase_1"/>
    <property type="match status" value="1"/>
</dbReference>
<dbReference type="CDD" id="cd11364">
    <property type="entry name" value="RNase_PH_PNPase_2"/>
    <property type="match status" value="1"/>
</dbReference>
<dbReference type="CDD" id="cd04472">
    <property type="entry name" value="S1_PNPase"/>
    <property type="match status" value="1"/>
</dbReference>
<dbReference type="FunFam" id="2.40.50.140:FF:000107">
    <property type="entry name" value="Polyribonucleotide nucleotidyltransferase"/>
    <property type="match status" value="1"/>
</dbReference>
<dbReference type="FunFam" id="3.30.1370.10:FF:000001">
    <property type="entry name" value="Polyribonucleotide nucleotidyltransferase"/>
    <property type="match status" value="1"/>
</dbReference>
<dbReference type="FunFam" id="3.30.230.70:FF:000001">
    <property type="entry name" value="Polyribonucleotide nucleotidyltransferase"/>
    <property type="match status" value="1"/>
</dbReference>
<dbReference type="FunFam" id="3.30.230.70:FF:000002">
    <property type="entry name" value="Polyribonucleotide nucleotidyltransferase"/>
    <property type="match status" value="1"/>
</dbReference>
<dbReference type="Gene3D" id="3.30.230.70">
    <property type="entry name" value="GHMP Kinase, N-terminal domain"/>
    <property type="match status" value="2"/>
</dbReference>
<dbReference type="Gene3D" id="3.30.1370.10">
    <property type="entry name" value="K Homology domain, type 1"/>
    <property type="match status" value="1"/>
</dbReference>
<dbReference type="Gene3D" id="2.40.50.140">
    <property type="entry name" value="Nucleic acid-binding proteins"/>
    <property type="match status" value="1"/>
</dbReference>
<dbReference type="HAMAP" id="MF_01595">
    <property type="entry name" value="PNPase"/>
    <property type="match status" value="1"/>
</dbReference>
<dbReference type="InterPro" id="IPR001247">
    <property type="entry name" value="ExoRNase_PH_dom1"/>
</dbReference>
<dbReference type="InterPro" id="IPR015847">
    <property type="entry name" value="ExoRNase_PH_dom2"/>
</dbReference>
<dbReference type="InterPro" id="IPR036345">
    <property type="entry name" value="ExoRNase_PH_dom2_sf"/>
</dbReference>
<dbReference type="InterPro" id="IPR004087">
    <property type="entry name" value="KH_dom"/>
</dbReference>
<dbReference type="InterPro" id="IPR004088">
    <property type="entry name" value="KH_dom_type_1"/>
</dbReference>
<dbReference type="InterPro" id="IPR036612">
    <property type="entry name" value="KH_dom_type_1_sf"/>
</dbReference>
<dbReference type="InterPro" id="IPR012340">
    <property type="entry name" value="NA-bd_OB-fold"/>
</dbReference>
<dbReference type="InterPro" id="IPR012162">
    <property type="entry name" value="PNPase"/>
</dbReference>
<dbReference type="InterPro" id="IPR027408">
    <property type="entry name" value="PNPase/RNase_PH_dom_sf"/>
</dbReference>
<dbReference type="InterPro" id="IPR015848">
    <property type="entry name" value="PNPase_PH_RNA-bd_bac/org-type"/>
</dbReference>
<dbReference type="InterPro" id="IPR020568">
    <property type="entry name" value="Ribosomal_Su5_D2-typ_SF"/>
</dbReference>
<dbReference type="InterPro" id="IPR003029">
    <property type="entry name" value="S1_domain"/>
</dbReference>
<dbReference type="NCBIfam" id="TIGR03591">
    <property type="entry name" value="polynuc_phos"/>
    <property type="match status" value="1"/>
</dbReference>
<dbReference type="NCBIfam" id="NF008805">
    <property type="entry name" value="PRK11824.1"/>
    <property type="match status" value="1"/>
</dbReference>
<dbReference type="PANTHER" id="PTHR11252">
    <property type="entry name" value="POLYRIBONUCLEOTIDE NUCLEOTIDYLTRANSFERASE"/>
    <property type="match status" value="1"/>
</dbReference>
<dbReference type="PANTHER" id="PTHR11252:SF0">
    <property type="entry name" value="POLYRIBONUCLEOTIDE NUCLEOTIDYLTRANSFERASE 1, MITOCHONDRIAL"/>
    <property type="match status" value="1"/>
</dbReference>
<dbReference type="Pfam" id="PF00013">
    <property type="entry name" value="KH_1"/>
    <property type="match status" value="1"/>
</dbReference>
<dbReference type="Pfam" id="PF03726">
    <property type="entry name" value="PNPase"/>
    <property type="match status" value="1"/>
</dbReference>
<dbReference type="Pfam" id="PF01138">
    <property type="entry name" value="RNase_PH"/>
    <property type="match status" value="2"/>
</dbReference>
<dbReference type="Pfam" id="PF03725">
    <property type="entry name" value="RNase_PH_C"/>
    <property type="match status" value="2"/>
</dbReference>
<dbReference type="Pfam" id="PF00575">
    <property type="entry name" value="S1"/>
    <property type="match status" value="1"/>
</dbReference>
<dbReference type="PIRSF" id="PIRSF005499">
    <property type="entry name" value="PNPase"/>
    <property type="match status" value="1"/>
</dbReference>
<dbReference type="SMART" id="SM00322">
    <property type="entry name" value="KH"/>
    <property type="match status" value="1"/>
</dbReference>
<dbReference type="SMART" id="SM00316">
    <property type="entry name" value="S1"/>
    <property type="match status" value="1"/>
</dbReference>
<dbReference type="SUPFAM" id="SSF54791">
    <property type="entry name" value="Eukaryotic type KH-domain (KH-domain type I)"/>
    <property type="match status" value="1"/>
</dbReference>
<dbReference type="SUPFAM" id="SSF50249">
    <property type="entry name" value="Nucleic acid-binding proteins"/>
    <property type="match status" value="1"/>
</dbReference>
<dbReference type="SUPFAM" id="SSF55666">
    <property type="entry name" value="Ribonuclease PH domain 2-like"/>
    <property type="match status" value="2"/>
</dbReference>
<dbReference type="SUPFAM" id="SSF54211">
    <property type="entry name" value="Ribosomal protein S5 domain 2-like"/>
    <property type="match status" value="2"/>
</dbReference>
<dbReference type="PROSITE" id="PS50084">
    <property type="entry name" value="KH_TYPE_1"/>
    <property type="match status" value="1"/>
</dbReference>
<dbReference type="PROSITE" id="PS50126">
    <property type="entry name" value="S1"/>
    <property type="match status" value="1"/>
</dbReference>
<gene>
    <name evidence="1" type="primary">pnp</name>
    <name type="ordered locus">Oant_0743</name>
</gene>
<accession>A6WWW1</accession>
<keyword id="KW-0963">Cytoplasm</keyword>
<keyword id="KW-0460">Magnesium</keyword>
<keyword id="KW-0479">Metal-binding</keyword>
<keyword id="KW-0548">Nucleotidyltransferase</keyword>
<keyword id="KW-1185">Reference proteome</keyword>
<keyword id="KW-0694">RNA-binding</keyword>
<keyword id="KW-0808">Transferase</keyword>
<evidence type="ECO:0000255" key="1">
    <source>
        <dbReference type="HAMAP-Rule" id="MF_01595"/>
    </source>
</evidence>
<name>PNP_BRUA4</name>
<comment type="function">
    <text evidence="1">Involved in mRNA degradation. Catalyzes the phosphorolysis of single-stranded polyribonucleotides processively in the 3'- to 5'-direction.</text>
</comment>
<comment type="catalytic activity">
    <reaction evidence="1">
        <text>RNA(n+1) + phosphate = RNA(n) + a ribonucleoside 5'-diphosphate</text>
        <dbReference type="Rhea" id="RHEA:22096"/>
        <dbReference type="Rhea" id="RHEA-COMP:14527"/>
        <dbReference type="Rhea" id="RHEA-COMP:17342"/>
        <dbReference type="ChEBI" id="CHEBI:43474"/>
        <dbReference type="ChEBI" id="CHEBI:57930"/>
        <dbReference type="ChEBI" id="CHEBI:140395"/>
        <dbReference type="EC" id="2.7.7.8"/>
    </reaction>
</comment>
<comment type="cofactor">
    <cofactor evidence="1">
        <name>Mg(2+)</name>
        <dbReference type="ChEBI" id="CHEBI:18420"/>
    </cofactor>
</comment>
<comment type="subcellular location">
    <subcellularLocation>
        <location evidence="1">Cytoplasm</location>
    </subcellularLocation>
</comment>
<comment type="similarity">
    <text evidence="1">Belongs to the polyribonucleotide nucleotidyltransferase family.</text>
</comment>
<feature type="chain" id="PRO_0000329744" description="Polyribonucleotide nucleotidyltransferase">
    <location>
        <begin position="1"/>
        <end position="713"/>
    </location>
</feature>
<feature type="domain" description="KH" evidence="1">
    <location>
        <begin position="555"/>
        <end position="614"/>
    </location>
</feature>
<feature type="domain" description="S1 motif" evidence="1">
    <location>
        <begin position="624"/>
        <end position="692"/>
    </location>
</feature>
<feature type="binding site" evidence="1">
    <location>
        <position position="488"/>
    </location>
    <ligand>
        <name>Mg(2+)</name>
        <dbReference type="ChEBI" id="CHEBI:18420"/>
    </ligand>
</feature>
<feature type="binding site" evidence="1">
    <location>
        <position position="494"/>
    </location>
    <ligand>
        <name>Mg(2+)</name>
        <dbReference type="ChEBI" id="CHEBI:18420"/>
    </ligand>
</feature>
<organism>
    <name type="scientific">Brucella anthropi (strain ATCC 49188 / DSM 6882 / CCUG 24695 / JCM 21032 / LMG 3331 / NBRC 15819 / NCTC 12168 / Alc 37)</name>
    <name type="common">Ochrobactrum anthropi</name>
    <dbReference type="NCBI Taxonomy" id="439375"/>
    <lineage>
        <taxon>Bacteria</taxon>
        <taxon>Pseudomonadati</taxon>
        <taxon>Pseudomonadota</taxon>
        <taxon>Alphaproteobacteria</taxon>
        <taxon>Hyphomicrobiales</taxon>
        <taxon>Brucellaceae</taxon>
        <taxon>Brucella/Ochrobactrum group</taxon>
        <taxon>Brucella</taxon>
    </lineage>
</organism>
<proteinExistence type="inferred from homology"/>
<sequence>MFNTHKVEIEWGGRPLTLETGKIARQADGAVLATYGETVVLATVVSAKEPKPGQDFFPLTVNYQEKTYAAGKIPGGYFKREGRPSENETLVSRLIDRPIRPLFVEGYKNDTQVVLTVVQHDLENNPDVLSMVAASAALTISGVPFMGPIGGARVGYINGEYVLNPNIDEMPESKLDLVVAGTADAVLMVESEAQELSEEVMLGAVVFGQKGFQPVIDAIIKLAEVAAKEPRDFQPEDLSDLEAKMLAVVENDLRDAYKITEKQARYVAVDAAKAKAKAHFFPEGVEEPEFSAEKFATVFKHLQAKIVRWNILDTGSRIDGRDLKTVRAIVSEVGLLPRTHGSALFTRGETQAIVVATLGTGEDEQMIDALTGTYKESFMLHYNFPPYSVGETGRMGSPGRREVGHGKLAWRAIHPMLPAADQFPYTIRSVSEITESNGSSSMATVCGTSLALMDAGVPLARPVAGIAMGLIKEGERFAVLSDILGDEDHLGDMDFKVAGTDNGITALQMDIKIDGITEEIMKVALEQAKGGRVHILGEMAKALSTSREELGEFAPRIEVMNIPTDKIRDVIGSGGKVIREIVEKTGAKINIEDDGTVKIASSNGKEIEAAKKWIHSIVAEPEVGEIYEGTVVKTADFGAFVNFFGPRDGLVHISQLASDRVAKTTDVVKEGQKVWVKLMGFDERGKVRLSMKVVDQETGKEVVAEKKAEADAE</sequence>